<feature type="chain" id="PRO_0000218646" description="Protein phosphatase EYA2">
    <location>
        <begin position="1"/>
        <end position="538"/>
    </location>
</feature>
<feature type="region of interest" description="Disordered" evidence="2">
    <location>
        <begin position="209"/>
        <end position="263"/>
    </location>
</feature>
<feature type="compositionally biased region" description="Polar residues" evidence="2">
    <location>
        <begin position="209"/>
        <end position="230"/>
    </location>
</feature>
<feature type="compositionally biased region" description="Basic and acidic residues" evidence="2">
    <location>
        <begin position="234"/>
        <end position="249"/>
    </location>
</feature>
<feature type="active site" description="Nucleophile" evidence="7">
    <location>
        <position position="274"/>
    </location>
</feature>
<feature type="active site" description="Proton donor" evidence="7">
    <location>
        <position position="276"/>
    </location>
</feature>
<feature type="binding site" evidence="5">
    <location>
        <position position="274"/>
    </location>
    <ligand>
        <name>Mg(2+)</name>
        <dbReference type="ChEBI" id="CHEBI:18420"/>
    </ligand>
</feature>
<feature type="binding site" evidence="5">
    <location>
        <position position="276"/>
    </location>
    <ligand>
        <name>Mg(2+)</name>
        <dbReference type="ChEBI" id="CHEBI:18420"/>
    </ligand>
</feature>
<feature type="binding site" evidence="5">
    <location>
        <position position="502"/>
    </location>
    <ligand>
        <name>Mg(2+)</name>
        <dbReference type="ChEBI" id="CHEBI:18420"/>
    </ligand>
</feature>
<feature type="splice variant" id="VSP_001490" description="In isoform 2." evidence="11 12">
    <location>
        <begin position="99"/>
        <end position="122"/>
    </location>
</feature>
<feature type="splice variant" id="VSP_001491" description="In isoform 3." evidence="11">
    <location>
        <begin position="401"/>
        <end position="479"/>
    </location>
</feature>
<feature type="sequence variant" id="VAR_048964" description="In dbSNP:rs2275596.">
    <original>P</original>
    <variation>S</variation>
    <location>
        <position position="83"/>
    </location>
</feature>
<feature type="sequence variant" id="VAR_048965" description="In dbSNP:rs866936.">
    <original>T</original>
    <variation>A</variation>
    <location>
        <position position="238"/>
    </location>
</feature>
<feature type="mutagenesis site" description="Strongly reduces SIX1 binding." evidence="9">
    <original>P</original>
    <variation>R</variation>
    <location>
        <position position="516"/>
    </location>
</feature>
<feature type="mutagenesis site" description="Abolishes interaction with SIX1." evidence="9">
    <original>A</original>
    <variation>R</variation>
    <location>
        <position position="532"/>
    </location>
</feature>
<feature type="sequence conflict" description="In Ref. 7; AAB42065." evidence="13" ref="7">
    <original>K</original>
    <variation>E</variation>
    <location>
        <position position="296"/>
    </location>
</feature>
<feature type="sequence conflict" description="In Ref. 4; AAP35328 and 6; AAH08803." evidence="13" ref="4 6">
    <original>G</original>
    <variation>A</variation>
    <location>
        <position position="361"/>
    </location>
</feature>
<feature type="sequence conflict" description="In Ref. 7; AAB42065." evidence="13" ref="7">
    <original>A</original>
    <variation>S</variation>
    <location>
        <position position="381"/>
    </location>
</feature>
<feature type="sequence conflict" description="In Ref. 8; CAA07815." evidence="13" ref="8">
    <original>A</original>
    <variation>V</variation>
    <location>
        <position position="419"/>
    </location>
</feature>
<feature type="sequence conflict" description="In Ref. 1; AAB51120." evidence="13" ref="1">
    <original>D</original>
    <variation>N</variation>
    <location>
        <position position="525"/>
    </location>
</feature>
<feature type="strand" evidence="16">
    <location>
        <begin position="269"/>
        <end position="273"/>
    </location>
</feature>
<feature type="turn" evidence="16">
    <location>
        <begin position="277"/>
        <end position="279"/>
    </location>
</feature>
<feature type="helix" evidence="16">
    <location>
        <begin position="283"/>
        <end position="287"/>
    </location>
</feature>
<feature type="helix" evidence="16">
    <location>
        <begin position="289"/>
        <end position="294"/>
    </location>
</feature>
<feature type="helix" evidence="16">
    <location>
        <begin position="298"/>
        <end position="319"/>
    </location>
</feature>
<feature type="helix" evidence="16">
    <location>
        <begin position="322"/>
        <end position="325"/>
    </location>
</feature>
<feature type="helix" evidence="15">
    <location>
        <begin position="326"/>
        <end position="328"/>
    </location>
</feature>
<feature type="turn" evidence="14">
    <location>
        <begin position="333"/>
        <end position="336"/>
    </location>
</feature>
<feature type="helix" evidence="14">
    <location>
        <begin position="337"/>
        <end position="339"/>
    </location>
</feature>
<feature type="helix" evidence="16">
    <location>
        <begin position="350"/>
        <end position="352"/>
    </location>
</feature>
<feature type="helix" evidence="16">
    <location>
        <begin position="374"/>
        <end position="394"/>
    </location>
</feature>
<feature type="helix" evidence="16">
    <location>
        <begin position="398"/>
        <end position="402"/>
    </location>
</feature>
<feature type="helix" evidence="16">
    <location>
        <begin position="406"/>
        <end position="420"/>
    </location>
</feature>
<feature type="turn" evidence="16">
    <location>
        <begin position="421"/>
        <end position="423"/>
    </location>
</feature>
<feature type="helix" evidence="16">
    <location>
        <begin position="424"/>
        <end position="436"/>
    </location>
</feature>
<feature type="strand" evidence="16">
    <location>
        <begin position="441"/>
        <end position="449"/>
    </location>
</feature>
<feature type="helix" evidence="16">
    <location>
        <begin position="451"/>
        <end position="460"/>
    </location>
</feature>
<feature type="turn" evidence="16">
    <location>
        <begin position="464"/>
        <end position="466"/>
    </location>
</feature>
<feature type="helix" evidence="16">
    <location>
        <begin position="469"/>
        <end position="471"/>
    </location>
</feature>
<feature type="strand" evidence="16">
    <location>
        <begin position="472"/>
        <end position="474"/>
    </location>
</feature>
<feature type="turn" evidence="16">
    <location>
        <begin position="476"/>
        <end position="478"/>
    </location>
</feature>
<feature type="helix" evidence="16">
    <location>
        <begin position="480"/>
        <end position="491"/>
    </location>
</feature>
<feature type="strand" evidence="16">
    <location>
        <begin position="493"/>
        <end position="503"/>
    </location>
</feature>
<feature type="helix" evidence="16">
    <location>
        <begin position="504"/>
        <end position="512"/>
    </location>
</feature>
<feature type="strand" evidence="16">
    <location>
        <begin position="517"/>
        <end position="519"/>
    </location>
</feature>
<feature type="helix" evidence="16">
    <location>
        <begin position="523"/>
        <end position="534"/>
    </location>
</feature>
<keyword id="KW-0002">3D-structure</keyword>
<keyword id="KW-0010">Activator</keyword>
<keyword id="KW-0025">Alternative splicing</keyword>
<keyword id="KW-0156">Chromatin regulator</keyword>
<keyword id="KW-0963">Cytoplasm</keyword>
<keyword id="KW-0217">Developmental protein</keyword>
<keyword id="KW-0227">DNA damage</keyword>
<keyword id="KW-0234">DNA repair</keyword>
<keyword id="KW-0378">Hydrolase</keyword>
<keyword id="KW-0460">Magnesium</keyword>
<keyword id="KW-0479">Metal-binding</keyword>
<keyword id="KW-0539">Nucleus</keyword>
<keyword id="KW-0904">Protein phosphatase</keyword>
<keyword id="KW-1267">Proteomics identification</keyword>
<keyword id="KW-1185">Reference proteome</keyword>
<keyword id="KW-0804">Transcription</keyword>
<keyword id="KW-0805">Transcription regulation</keyword>
<evidence type="ECO:0000250" key="1"/>
<evidence type="ECO:0000256" key="2">
    <source>
        <dbReference type="SAM" id="MobiDB-lite"/>
    </source>
</evidence>
<evidence type="ECO:0000269" key="3">
    <source>
    </source>
</evidence>
<evidence type="ECO:0000269" key="4">
    <source>
    </source>
</evidence>
<evidence type="ECO:0000269" key="5">
    <source>
    </source>
</evidence>
<evidence type="ECO:0000269" key="6">
    <source>
    </source>
</evidence>
<evidence type="ECO:0000269" key="7">
    <source>
    </source>
</evidence>
<evidence type="ECO:0000269" key="8">
    <source>
    </source>
</evidence>
<evidence type="ECO:0000269" key="9">
    <source>
    </source>
</evidence>
<evidence type="ECO:0000269" key="10">
    <source>
    </source>
</evidence>
<evidence type="ECO:0000303" key="11">
    <source>
    </source>
</evidence>
<evidence type="ECO:0000303" key="12">
    <source ref="4"/>
</evidence>
<evidence type="ECO:0000305" key="13"/>
<evidence type="ECO:0007829" key="14">
    <source>
        <dbReference type="PDB" id="3GEB"/>
    </source>
</evidence>
<evidence type="ECO:0007829" key="15">
    <source>
        <dbReference type="PDB" id="3HB0"/>
    </source>
</evidence>
<evidence type="ECO:0007829" key="16">
    <source>
        <dbReference type="PDB" id="4EGC"/>
    </source>
</evidence>
<gene>
    <name type="primary">EYA2</name>
    <name type="synonym">EAB1</name>
</gene>
<accession>O00167</accession>
<accession>Q5JSW8</accession>
<accession>Q86U84</accession>
<accession>Q96CV6</accession>
<accession>Q96H97</accession>
<accession>Q99503</accession>
<accession>Q99812</accession>
<accession>Q9BWF6</accession>
<accession>Q9H4S3</accession>
<accession>Q9H4S9</accession>
<accession>Q9NPZ4</accession>
<accession>Q9UIX7</accession>
<dbReference type="EC" id="3.1.3.48" evidence="5"/>
<dbReference type="EMBL" id="U71207">
    <property type="protein sequence ID" value="AAB51120.1"/>
    <property type="molecule type" value="mRNA"/>
</dbReference>
<dbReference type="EMBL" id="Y10261">
    <property type="protein sequence ID" value="CAA71310.1"/>
    <property type="molecule type" value="Genomic_DNA"/>
</dbReference>
<dbReference type="EMBL" id="BT006682">
    <property type="protein sequence ID" value="AAP35328.1"/>
    <property type="molecule type" value="mRNA"/>
</dbReference>
<dbReference type="EMBL" id="AL049540">
    <property type="protein sequence ID" value="CAI23166.1"/>
    <property type="molecule type" value="Genomic_DNA"/>
</dbReference>
<dbReference type="EMBL" id="AL121776">
    <property type="protein sequence ID" value="CAI23166.1"/>
    <property type="status" value="JOINED"/>
    <property type="molecule type" value="Genomic_DNA"/>
</dbReference>
<dbReference type="EMBL" id="AL359434">
    <property type="protein sequence ID" value="CAI23166.1"/>
    <property type="status" value="JOINED"/>
    <property type="molecule type" value="Genomic_DNA"/>
</dbReference>
<dbReference type="EMBL" id="AL022342">
    <property type="protein sequence ID" value="CAI23166.1"/>
    <property type="status" value="JOINED"/>
    <property type="molecule type" value="Genomic_DNA"/>
</dbReference>
<dbReference type="EMBL" id="BC000289">
    <property type="protein sequence ID" value="AAH00289.2"/>
    <property type="molecule type" value="mRNA"/>
</dbReference>
<dbReference type="EMBL" id="BC008803">
    <property type="protein sequence ID" value="AAH08803.1"/>
    <property type="molecule type" value="mRNA"/>
</dbReference>
<dbReference type="EMBL" id="BC013882">
    <property type="protein sequence ID" value="AAH13882.2"/>
    <property type="status" value="ALT_INIT"/>
    <property type="molecule type" value="mRNA"/>
</dbReference>
<dbReference type="EMBL" id="U81601">
    <property type="protein sequence ID" value="AAB42065.1"/>
    <property type="molecule type" value="mRNA"/>
</dbReference>
<dbReference type="EMBL" id="AJ007992">
    <property type="protein sequence ID" value="CAA07815.1"/>
    <property type="molecule type" value="mRNA"/>
</dbReference>
<dbReference type="CCDS" id="CCDS13403.1">
    <molecule id="O00167-1"/>
</dbReference>
<dbReference type="CCDS" id="CCDS54471.1">
    <molecule id="O00167-3"/>
</dbReference>
<dbReference type="RefSeq" id="NP_005235.3">
    <molecule id="O00167-1"/>
    <property type="nucleotide sequence ID" value="NM_005244.4"/>
</dbReference>
<dbReference type="RefSeq" id="NP_742108.2">
    <molecule id="O00167-3"/>
    <property type="nucleotide sequence ID" value="NM_172110.4"/>
</dbReference>
<dbReference type="RefSeq" id="XP_047295966.1">
    <molecule id="O00167-1"/>
    <property type="nucleotide sequence ID" value="XM_047440010.1"/>
</dbReference>
<dbReference type="PDB" id="3GEB">
    <property type="method" value="X-ray"/>
    <property type="resolution" value="2.40 A"/>
    <property type="chains" value="A/B/C/D=268-538"/>
</dbReference>
<dbReference type="PDB" id="3HB0">
    <property type="method" value="X-ray"/>
    <property type="resolution" value="2.50 A"/>
    <property type="chains" value="A/B/C/D=268-538"/>
</dbReference>
<dbReference type="PDB" id="3HB1">
    <property type="method" value="X-ray"/>
    <property type="resolution" value="2.51 A"/>
    <property type="chains" value="A/B/C/D=268-538"/>
</dbReference>
<dbReference type="PDB" id="4EGC">
    <property type="method" value="X-ray"/>
    <property type="resolution" value="1.99 A"/>
    <property type="chains" value="B=253-538"/>
</dbReference>
<dbReference type="PDB" id="5ZMA">
    <property type="method" value="X-ray"/>
    <property type="resolution" value="3.17 A"/>
    <property type="chains" value="A/B/C=253-538"/>
</dbReference>
<dbReference type="PDB" id="7F8G">
    <property type="method" value="X-ray"/>
    <property type="resolution" value="3.49 A"/>
    <property type="chains" value="A/B=253-538"/>
</dbReference>
<dbReference type="PDB" id="7F8H">
    <property type="method" value="X-ray"/>
    <property type="resolution" value="3.30 A"/>
    <property type="chains" value="A/B/C=253-538"/>
</dbReference>
<dbReference type="PDBsum" id="3GEB"/>
<dbReference type="PDBsum" id="3HB0"/>
<dbReference type="PDBsum" id="3HB1"/>
<dbReference type="PDBsum" id="4EGC"/>
<dbReference type="PDBsum" id="5ZMA"/>
<dbReference type="PDBsum" id="7F8G"/>
<dbReference type="PDBsum" id="7F8H"/>
<dbReference type="SMR" id="O00167"/>
<dbReference type="BioGRID" id="108440">
    <property type="interactions" value="124"/>
</dbReference>
<dbReference type="DIP" id="DIP-40707N"/>
<dbReference type="FunCoup" id="O00167">
    <property type="interactions" value="1566"/>
</dbReference>
<dbReference type="IntAct" id="O00167">
    <property type="interactions" value="72"/>
</dbReference>
<dbReference type="MINT" id="O00167"/>
<dbReference type="STRING" id="9606.ENSP00000333640"/>
<dbReference type="BindingDB" id="O00167"/>
<dbReference type="ChEMBL" id="CHEMBL1293275"/>
<dbReference type="DrugCentral" id="O00167"/>
<dbReference type="DEPOD" id="EYA2"/>
<dbReference type="GlyGen" id="O00167">
    <property type="glycosylation" value="1 site, 1 O-linked glycan (1 site)"/>
</dbReference>
<dbReference type="iPTMnet" id="O00167"/>
<dbReference type="PhosphoSitePlus" id="O00167"/>
<dbReference type="BioMuta" id="EYA2"/>
<dbReference type="jPOST" id="O00167"/>
<dbReference type="MassIVE" id="O00167"/>
<dbReference type="PaxDb" id="9606-ENSP00000333640"/>
<dbReference type="PeptideAtlas" id="O00167"/>
<dbReference type="ProteomicsDB" id="47756">
    <molecule id="O00167-1"/>
</dbReference>
<dbReference type="ProteomicsDB" id="47757">
    <molecule id="O00167-2"/>
</dbReference>
<dbReference type="ProteomicsDB" id="47758">
    <molecule id="O00167-3"/>
</dbReference>
<dbReference type="Antibodypedia" id="13258">
    <property type="antibodies" value="276 antibodies from 30 providers"/>
</dbReference>
<dbReference type="DNASU" id="2139"/>
<dbReference type="Ensembl" id="ENST00000327619.10">
    <molecule id="O00167-1"/>
    <property type="protein sequence ID" value="ENSP00000333640.5"/>
    <property type="gene ID" value="ENSG00000064655.19"/>
</dbReference>
<dbReference type="Ensembl" id="ENST00000357410.7">
    <molecule id="O00167-3"/>
    <property type="protein sequence ID" value="ENSP00000349986.3"/>
    <property type="gene ID" value="ENSG00000064655.19"/>
</dbReference>
<dbReference type="Ensembl" id="ENST00000497062.6">
    <molecule id="O00167-2"/>
    <property type="protein sequence ID" value="ENSP00000417105.3"/>
    <property type="gene ID" value="ENSG00000064655.19"/>
</dbReference>
<dbReference type="GeneID" id="2139"/>
<dbReference type="KEGG" id="hsa:2139"/>
<dbReference type="MANE-Select" id="ENST00000327619.10">
    <property type="protein sequence ID" value="ENSP00000333640.5"/>
    <property type="RefSeq nucleotide sequence ID" value="NM_005244.5"/>
    <property type="RefSeq protein sequence ID" value="NP_005235.3"/>
</dbReference>
<dbReference type="UCSC" id="uc002xsm.3">
    <molecule id="O00167-1"/>
    <property type="organism name" value="human"/>
</dbReference>
<dbReference type="AGR" id="HGNC:3520"/>
<dbReference type="CTD" id="2139"/>
<dbReference type="DisGeNET" id="2139"/>
<dbReference type="GeneCards" id="EYA2"/>
<dbReference type="HGNC" id="HGNC:3520">
    <property type="gene designation" value="EYA2"/>
</dbReference>
<dbReference type="HPA" id="ENSG00000064655">
    <property type="expression patterns" value="Tissue enhanced (cervix)"/>
</dbReference>
<dbReference type="MIM" id="601654">
    <property type="type" value="gene"/>
</dbReference>
<dbReference type="neXtProt" id="NX_O00167"/>
<dbReference type="OpenTargets" id="ENSG00000064655"/>
<dbReference type="PharmGKB" id="PA27932"/>
<dbReference type="VEuPathDB" id="HostDB:ENSG00000064655"/>
<dbReference type="eggNOG" id="KOG3107">
    <property type="taxonomic scope" value="Eukaryota"/>
</dbReference>
<dbReference type="GeneTree" id="ENSGT00950000182978"/>
<dbReference type="HOGENOM" id="CLU_021184_2_0_1"/>
<dbReference type="InParanoid" id="O00167"/>
<dbReference type="OMA" id="XPNCVNV"/>
<dbReference type="OrthoDB" id="167668at2759"/>
<dbReference type="PAN-GO" id="O00167">
    <property type="GO annotations" value="7 GO annotations based on evolutionary models"/>
</dbReference>
<dbReference type="PhylomeDB" id="O00167"/>
<dbReference type="TreeFam" id="TF319337"/>
<dbReference type="BRENDA" id="3.1.3.48">
    <property type="organism ID" value="2681"/>
</dbReference>
<dbReference type="PathwayCommons" id="O00167"/>
<dbReference type="Reactome" id="R-HSA-5693565">
    <property type="pathway name" value="Recruitment and ATM-mediated phosphorylation of repair and signaling proteins at DNA double strand breaks"/>
</dbReference>
<dbReference type="SABIO-RK" id="O00167"/>
<dbReference type="SignaLink" id="O00167"/>
<dbReference type="BioGRID-ORCS" id="2139">
    <property type="hits" value="16 hits in 1168 CRISPR screens"/>
</dbReference>
<dbReference type="ChiTaRS" id="EYA2">
    <property type="organism name" value="human"/>
</dbReference>
<dbReference type="EvolutionaryTrace" id="O00167"/>
<dbReference type="GeneWiki" id="EYA2"/>
<dbReference type="GenomeRNAi" id="2139"/>
<dbReference type="Pharos" id="O00167">
    <property type="development level" value="Tbio"/>
</dbReference>
<dbReference type="PRO" id="PR:O00167"/>
<dbReference type="Proteomes" id="UP000005640">
    <property type="component" value="Chromosome 20"/>
</dbReference>
<dbReference type="RNAct" id="O00167">
    <property type="molecule type" value="protein"/>
</dbReference>
<dbReference type="Bgee" id="ENSG00000064655">
    <property type="expression patterns" value="Expressed in olfactory segment of nasal mucosa and 132 other cell types or tissues"/>
</dbReference>
<dbReference type="ExpressionAtlas" id="O00167">
    <property type="expression patterns" value="baseline and differential"/>
</dbReference>
<dbReference type="GO" id="GO:0005829">
    <property type="term" value="C:cytosol"/>
    <property type="evidence" value="ECO:0000314"/>
    <property type="project" value="HPA"/>
</dbReference>
<dbReference type="GO" id="GO:0005739">
    <property type="term" value="C:mitochondrion"/>
    <property type="evidence" value="ECO:0007669"/>
    <property type="project" value="GOC"/>
</dbReference>
<dbReference type="GO" id="GO:0005654">
    <property type="term" value="C:nucleoplasm"/>
    <property type="evidence" value="ECO:0000304"/>
    <property type="project" value="Reactome"/>
</dbReference>
<dbReference type="GO" id="GO:0005634">
    <property type="term" value="C:nucleus"/>
    <property type="evidence" value="ECO:0000318"/>
    <property type="project" value="GO_Central"/>
</dbReference>
<dbReference type="GO" id="GO:0140793">
    <property type="term" value="F:histone H2AXY142 phosphatase activity"/>
    <property type="evidence" value="ECO:0000314"/>
    <property type="project" value="UniProtKB"/>
</dbReference>
<dbReference type="GO" id="GO:0000287">
    <property type="term" value="F:magnesium ion binding"/>
    <property type="evidence" value="ECO:0000314"/>
    <property type="project" value="UniProtKB"/>
</dbReference>
<dbReference type="GO" id="GO:0004725">
    <property type="term" value="F:protein tyrosine phosphatase activity"/>
    <property type="evidence" value="ECO:0000318"/>
    <property type="project" value="GO_Central"/>
</dbReference>
<dbReference type="GO" id="GO:0030154">
    <property type="term" value="P:cell differentiation"/>
    <property type="evidence" value="ECO:0000318"/>
    <property type="project" value="GO_Central"/>
</dbReference>
<dbReference type="GO" id="GO:0006281">
    <property type="term" value="P:DNA repair"/>
    <property type="evidence" value="ECO:0007669"/>
    <property type="project" value="UniProtKB-KW"/>
</dbReference>
<dbReference type="GO" id="GO:0097192">
    <property type="term" value="P:extrinsic apoptotic signaling pathway in absence of ligand"/>
    <property type="evidence" value="ECO:0007669"/>
    <property type="project" value="Ensembl"/>
</dbReference>
<dbReference type="GO" id="GO:0007501">
    <property type="term" value="P:mesodermal cell fate specification"/>
    <property type="evidence" value="ECO:0000304"/>
    <property type="project" value="ProtInc"/>
</dbReference>
<dbReference type="GO" id="GO:0097345">
    <property type="term" value="P:mitochondrial outer membrane permeabilization"/>
    <property type="evidence" value="ECO:0007669"/>
    <property type="project" value="Ensembl"/>
</dbReference>
<dbReference type="GO" id="GO:2001240">
    <property type="term" value="P:negative regulation of extrinsic apoptotic signaling pathway in absence of ligand"/>
    <property type="evidence" value="ECO:0000318"/>
    <property type="project" value="GO_Central"/>
</dbReference>
<dbReference type="GO" id="GO:0045739">
    <property type="term" value="P:positive regulation of DNA repair"/>
    <property type="evidence" value="ECO:0000318"/>
    <property type="project" value="GO_Central"/>
</dbReference>
<dbReference type="GO" id="GO:0014706">
    <property type="term" value="P:striated muscle tissue development"/>
    <property type="evidence" value="ECO:0007669"/>
    <property type="project" value="Ensembl"/>
</dbReference>
<dbReference type="CDD" id="cd02601">
    <property type="entry name" value="HAD_Eya"/>
    <property type="match status" value="1"/>
</dbReference>
<dbReference type="FunFam" id="3.40.50.12350:FF:000001">
    <property type="entry name" value="Eyes absent homolog"/>
    <property type="match status" value="1"/>
</dbReference>
<dbReference type="Gene3D" id="3.40.50.12350">
    <property type="match status" value="1"/>
</dbReference>
<dbReference type="InterPro" id="IPR028472">
    <property type="entry name" value="EYA"/>
</dbReference>
<dbReference type="InterPro" id="IPR006545">
    <property type="entry name" value="EYA_dom"/>
</dbReference>
<dbReference type="InterPro" id="IPR042577">
    <property type="entry name" value="EYA_dom_metazoan"/>
</dbReference>
<dbReference type="InterPro" id="IPR038102">
    <property type="entry name" value="EYA_dom_sf"/>
</dbReference>
<dbReference type="InterPro" id="IPR036412">
    <property type="entry name" value="HAD-like_sf"/>
</dbReference>
<dbReference type="NCBIfam" id="TIGR01658">
    <property type="entry name" value="EYA-cons_domain"/>
    <property type="match status" value="1"/>
</dbReference>
<dbReference type="PANTHER" id="PTHR10190">
    <property type="entry name" value="EYES ABSENT"/>
    <property type="match status" value="1"/>
</dbReference>
<dbReference type="PANTHER" id="PTHR10190:SF7">
    <property type="entry name" value="EYES ABSENT HOMOLOG 2"/>
    <property type="match status" value="1"/>
</dbReference>
<dbReference type="Pfam" id="PF00702">
    <property type="entry name" value="Hydrolase"/>
    <property type="match status" value="1"/>
</dbReference>
<dbReference type="SFLD" id="SFLDG01129">
    <property type="entry name" value="C1.5:_HAD__Beta-PGM__Phosphata"/>
    <property type="match status" value="1"/>
</dbReference>
<dbReference type="SFLD" id="SFLDS00003">
    <property type="entry name" value="Haloacid_Dehalogenase"/>
    <property type="match status" value="1"/>
</dbReference>
<dbReference type="SUPFAM" id="SSF56784">
    <property type="entry name" value="HAD-like"/>
    <property type="match status" value="1"/>
</dbReference>
<proteinExistence type="evidence at protein level"/>
<organism>
    <name type="scientific">Homo sapiens</name>
    <name type="common">Human</name>
    <dbReference type="NCBI Taxonomy" id="9606"/>
    <lineage>
        <taxon>Eukaryota</taxon>
        <taxon>Metazoa</taxon>
        <taxon>Chordata</taxon>
        <taxon>Craniata</taxon>
        <taxon>Vertebrata</taxon>
        <taxon>Euteleostomi</taxon>
        <taxon>Mammalia</taxon>
        <taxon>Eutheria</taxon>
        <taxon>Euarchontoglires</taxon>
        <taxon>Primates</taxon>
        <taxon>Haplorrhini</taxon>
        <taxon>Catarrhini</taxon>
        <taxon>Hominidae</taxon>
        <taxon>Homo</taxon>
    </lineage>
</organism>
<sequence>MVELVISPSLTVNSDCLDKLKFNRADAAVWTLSDRQGITKSAPLRVSQLFSRSCPRVLPRQPSTAMAAYGQTQYSAGIQQATPYTAYPPPAQAYGIPSYSIKTEDSLNHSPGQSGFLSYGSSFSTSPTGQSPYTYQMHGTTGFYQGGNGLGNAAGFGSVHQDYPSYPGFPQSQYPQYYGSSYNPPYVPASSICPSPLSTSTYVLQEASHNVPNQSSESLAGEYNTHNGPSTPAKEGDTDRPHRASDGKLRGRSKRSSDPSPAGDNEIERVFVWDLDETIIIFHSLLTGTFASRYGKDTTTSVRIGLMMEEMIFNLADTHLFFNDLEDCDQIHVDDVSSDDNGQDLSTYNFSADGFHSSAPGANLCLGSGVHGGVDWMRKLAFRYRRVKEMYNTYKNNVGGLIGTPKRETWLQLRAELEALTDLWLTHSLKALNLINSRPNCVNVLVTTTQLIPALAKVLLYGLGSVFPIENIYSATKTGKESCFERIMQRFGRKAVYVVIGDGVEEEQGAKKHNMPFWRISCHADLEALRHALELEYL</sequence>
<comment type="function">
    <text evidence="4 5 8 9">Functions both as protein phosphatase and as transcriptional coactivator for SIX1, and probably also for SIX2, SIX4 and SIX5 (PubMed:12500905, PubMed:23435380). Tyrosine phosphatase that dephosphorylates 'Tyr-142' of histone H2AX (H2AXY142ph) and promotes efficient DNA repair via the recruitment of DNA repair complexes containing MDC1. 'Tyr-142' phosphorylation of histone H2AX plays a central role in DNA repair and acts as a mark that distinguishes between apoptotic and repair responses to genotoxic stress (PubMed:19351884). Its function as histone phosphatase may contribute to its function in transcription regulation during organogenesis. Plays an important role in hypaxial muscle development together with SIX1 and DACH2; in this it is functionally redundant with EYA1 (PubMed:12500905).</text>
</comment>
<comment type="catalytic activity">
    <reaction evidence="5">
        <text>O-phospho-L-tyrosyl-[protein] + H2O = L-tyrosyl-[protein] + phosphate</text>
        <dbReference type="Rhea" id="RHEA:10684"/>
        <dbReference type="Rhea" id="RHEA-COMP:10136"/>
        <dbReference type="Rhea" id="RHEA-COMP:20101"/>
        <dbReference type="ChEBI" id="CHEBI:15377"/>
        <dbReference type="ChEBI" id="CHEBI:43474"/>
        <dbReference type="ChEBI" id="CHEBI:46858"/>
        <dbReference type="ChEBI" id="CHEBI:61978"/>
        <dbReference type="EC" id="3.1.3.48"/>
    </reaction>
</comment>
<comment type="cofactor">
    <cofactor evidence="7">
        <name>Mg(2+)</name>
        <dbReference type="ChEBI" id="CHEBI:18420"/>
    </cofactor>
    <text evidence="7">Binds 1 Mg(2+) ion per subunit.</text>
</comment>
<comment type="biophysicochemical properties">
    <kinetics>
        <KM evidence="5">1.9 uM for H2AXY142ph</KM>
        <KM evidence="5">80 uM for H2AXS139ph</KM>
    </kinetics>
</comment>
<comment type="subunit">
    <text evidence="1 3 5 6 7 9">Interacts with DACH2 and SIX1, and probably with SIX2, SIX4 and SIX5. Interacts with CAPN8 (By similarity). Interacts with GNAZ and GNAI2; this precludes interaction with SIX1.</text>
</comment>
<comment type="interaction">
    <interactant intactId="EBI-750211">
        <id>O00167</id>
    </interactant>
    <interactant intactId="EBI-743675">
        <id>Q15475</id>
        <label>SIX1</label>
    </interactant>
    <organismsDiffer>false</organismsDiffer>
    <experiments>4</experiments>
</comment>
<comment type="interaction">
    <interactant intactId="EBI-16038245">
        <id>O00167-1</id>
    </interactant>
    <interactant intactId="EBI-743675">
        <id>Q15475</id>
        <label>SIX1</label>
    </interactant>
    <organismsDiffer>false</organismsDiffer>
    <experiments>3</experiments>
</comment>
<comment type="interaction">
    <interactant intactId="EBI-12807776">
        <id>O00167-2</id>
    </interactant>
    <interactant intactId="EBI-745689">
        <id>Q7L5A3</id>
        <label>ATOSB</label>
    </interactant>
    <organismsDiffer>false</organismsDiffer>
    <experiments>3</experiments>
</comment>
<comment type="interaction">
    <interactant intactId="EBI-12807776">
        <id>O00167-2</id>
    </interactant>
    <interactant intactId="EBI-747185">
        <id>O95817</id>
        <label>BAG3</label>
    </interactant>
    <organismsDiffer>false</organismsDiffer>
    <experiments>4</experiments>
</comment>
<comment type="interaction">
    <interactant intactId="EBI-12807776">
        <id>O00167-2</id>
    </interactant>
    <interactant intactId="EBI-744545">
        <id>Q8NEC5</id>
        <label>CATSPER1</label>
    </interactant>
    <organismsDiffer>false</organismsDiffer>
    <experiments>3</experiments>
</comment>
<comment type="interaction">
    <interactant intactId="EBI-12807776">
        <id>O00167-2</id>
    </interactant>
    <interactant intactId="EBI-746238">
        <id>Q07002</id>
        <label>CDK18</label>
    </interactant>
    <organismsDiffer>false</organismsDiffer>
    <experiments>3</experiments>
</comment>
<comment type="interaction">
    <interactant intactId="EBI-12807776">
        <id>O00167-2</id>
    </interactant>
    <interactant intactId="EBI-740376">
        <id>Q86UW9</id>
        <label>DTX2</label>
    </interactant>
    <organismsDiffer>false</organismsDiffer>
    <experiments>3</experiments>
</comment>
<comment type="interaction">
    <interactant intactId="EBI-12807776">
        <id>O00167-2</id>
    </interactant>
    <interactant intactId="EBI-7357329">
        <id>Q9H596</id>
        <label>DUSP21</label>
    </interactant>
    <organismsDiffer>false</organismsDiffer>
    <experiments>3</experiments>
</comment>
<comment type="interaction">
    <interactant intactId="EBI-12807776">
        <id>O00167-2</id>
    </interactant>
    <interactant intactId="EBI-744099">
        <id>Q9H0I2</id>
        <label>ENKD1</label>
    </interactant>
    <organismsDiffer>false</organismsDiffer>
    <experiments>3</experiments>
</comment>
<comment type="interaction">
    <interactant intactId="EBI-12807776">
        <id>O00167-2</id>
    </interactant>
    <interactant intactId="EBI-740220">
        <id>O14964</id>
        <label>HGS</label>
    </interactant>
    <organismsDiffer>false</organismsDiffer>
    <experiments>3</experiments>
</comment>
<comment type="interaction">
    <interactant intactId="EBI-12807776">
        <id>O00167-2</id>
    </interactant>
    <interactant intactId="EBI-10220600">
        <id>Q8NA54</id>
        <label>IQUB</label>
    </interactant>
    <organismsDiffer>false</organismsDiffer>
    <experiments>3</experiments>
</comment>
<comment type="interaction">
    <interactant intactId="EBI-12807776">
        <id>O00167-2</id>
    </interactant>
    <interactant intactId="EBI-720805">
        <id>P56470</id>
        <label>LGALS4</label>
    </interactant>
    <organismsDiffer>false</organismsDiffer>
    <experiments>3</experiments>
</comment>
<comment type="interaction">
    <interactant intactId="EBI-12807776">
        <id>O00167-2</id>
    </interactant>
    <interactant intactId="EBI-394558">
        <id>Q71SY5</id>
        <label>MED25</label>
    </interactant>
    <organismsDiffer>false</organismsDiffer>
    <experiments>3</experiments>
</comment>
<comment type="interaction">
    <interactant intactId="EBI-12807776">
        <id>O00167-2</id>
    </interactant>
    <interactant intactId="EBI-11022007">
        <id>Q9HBE1-4</id>
        <label>PATZ1</label>
    </interactant>
    <organismsDiffer>false</organismsDiffer>
    <experiments>3</experiments>
</comment>
<comment type="interaction">
    <interactant intactId="EBI-12807776">
        <id>O00167-2</id>
    </interactant>
    <interactant intactId="EBI-12111000">
        <id>P55771</id>
        <label>PAX9</label>
    </interactant>
    <organismsDiffer>false</organismsDiffer>
    <experiments>3</experiments>
</comment>
<comment type="interaction">
    <interactant intactId="EBI-12807776">
        <id>O00167-2</id>
    </interactant>
    <interactant intactId="EBI-714158">
        <id>Q13526</id>
        <label>PIN1</label>
    </interactant>
    <organismsDiffer>false</organismsDiffer>
    <experiments>3</experiments>
</comment>
<comment type="interaction">
    <interactant intactId="EBI-12807776">
        <id>O00167-2</id>
    </interactant>
    <interactant intactId="EBI-1389308">
        <id>Q7Z3K3</id>
        <label>POGZ</label>
    </interactant>
    <organismsDiffer>false</organismsDiffer>
    <experiments>3</experiments>
</comment>
<comment type="interaction">
    <interactant intactId="EBI-12807776">
        <id>O00167-2</id>
    </interactant>
    <interactant intactId="EBI-746731">
        <id>P48378</id>
        <label>RFX2</label>
    </interactant>
    <organismsDiffer>false</organismsDiffer>
    <experiments>3</experiments>
</comment>
<comment type="interaction">
    <interactant intactId="EBI-12807776">
        <id>O00167-2</id>
    </interactant>
    <interactant intactId="EBI-743675">
        <id>Q15475</id>
        <label>SIX1</label>
    </interactant>
    <organismsDiffer>false</organismsDiffer>
    <experiments>3</experiments>
</comment>
<comment type="interaction">
    <interactant intactId="EBI-12807776">
        <id>O00167-2</id>
    </interactant>
    <interactant intactId="EBI-766589">
        <id>P09234</id>
        <label>SNRPC</label>
    </interactant>
    <organismsDiffer>false</organismsDiffer>
    <experiments>3</experiments>
</comment>
<comment type="interaction">
    <interactant intactId="EBI-12807776">
        <id>O00167-2</id>
    </interactant>
    <interactant intactId="EBI-742688">
        <id>Q9NZD8</id>
        <label>SPG21</label>
    </interactant>
    <organismsDiffer>false</organismsDiffer>
    <experiments>3</experiments>
</comment>
<comment type="interaction">
    <interactant intactId="EBI-12807776">
        <id>O00167-2</id>
    </interactant>
    <interactant intactId="EBI-3921347">
        <id>P51687</id>
        <label>SUOX</label>
    </interactant>
    <organismsDiffer>false</organismsDiffer>
    <experiments>3</experiments>
</comment>
<comment type="interaction">
    <interactant intactId="EBI-12807776">
        <id>O00167-2</id>
    </interactant>
    <interactant intactId="EBI-750487">
        <id>Q8WW24</id>
        <label>TEKT4</label>
    </interactant>
    <organismsDiffer>false</organismsDiffer>
    <experiments>3</experiments>
</comment>
<comment type="interaction">
    <interactant intactId="EBI-12807776">
        <id>O00167-2</id>
    </interactant>
    <interactant intactId="EBI-10239812">
        <id>Q96M29</id>
        <label>TEKT5</label>
    </interactant>
    <organismsDiffer>false</organismsDiffer>
    <experiments>3</experiments>
</comment>
<comment type="interaction">
    <interactant intactId="EBI-12807776">
        <id>O00167-2</id>
    </interactant>
    <interactant intactId="EBI-357061">
        <id>Q92734</id>
        <label>TFG</label>
    </interactant>
    <organismsDiffer>false</organismsDiffer>
    <experiments>3</experiments>
</comment>
<comment type="interaction">
    <interactant intactId="EBI-12807776">
        <id>O00167-2</id>
    </interactant>
    <interactant intactId="EBI-11741437">
        <id>Q08117-2</id>
        <label>TLE5</label>
    </interactant>
    <organismsDiffer>false</organismsDiffer>
    <experiments>3</experiments>
</comment>
<comment type="interaction">
    <interactant intactId="EBI-12807776">
        <id>O00167-2</id>
    </interactant>
    <interactant intactId="EBI-3650647">
        <id>Q9BUZ4</id>
        <label>TRAF4</label>
    </interactant>
    <organismsDiffer>false</organismsDiffer>
    <experiments>3</experiments>
</comment>
<comment type="interaction">
    <interactant intactId="EBI-12807776">
        <id>O00167-2</id>
    </interactant>
    <interactant intactId="EBI-8451480">
        <id>O75865-2</id>
        <label>TRAPPC6A</label>
    </interactant>
    <organismsDiffer>false</organismsDiffer>
    <experiments>3</experiments>
</comment>
<comment type="interaction">
    <interactant intactId="EBI-12807776">
        <id>O00167-2</id>
    </interactant>
    <interactant intactId="EBI-3918381">
        <id>Q96PN8</id>
        <label>TSSK3</label>
    </interactant>
    <organismsDiffer>false</organismsDiffer>
    <experiments>3</experiments>
</comment>
<comment type="interaction">
    <interactant intactId="EBI-12807776">
        <id>O00167-2</id>
    </interactant>
    <interactant intactId="EBI-2559305">
        <id>A5D8V6</id>
        <label>VPS37C</label>
    </interactant>
    <organismsDiffer>false</organismsDiffer>
    <experiments>3</experiments>
</comment>
<comment type="subcellular location">
    <subcellularLocation>
        <location evidence="3 4">Cytoplasm</location>
    </subcellularLocation>
    <subcellularLocation>
        <location evidence="3 4 6">Nucleus</location>
    </subcellularLocation>
    <text evidence="3 4">Retained in the cytoplasm via interaction with GNAZ and GNAI2 (PubMed:10906137). Interaction with SIX1, SIX2, SIX4 or SIX5 is required for translocation to the nucleus (PubMed:10906137, PubMed:12500905).</text>
</comment>
<comment type="alternative products">
    <event type="alternative splicing"/>
    <isoform>
        <id>O00167-1</id>
        <name>1</name>
        <sequence type="displayed"/>
    </isoform>
    <isoform>
        <id>O00167-2</id>
        <name>2</name>
        <sequence type="described" ref="VSP_001490"/>
    </isoform>
    <isoform>
        <id>O00167-3</id>
        <name>3</name>
        <sequence type="described" ref="VSP_001491"/>
    </isoform>
    <text>Experimental confirmation may be lacking for some isoforms.</text>
</comment>
<comment type="tissue specificity">
    <text evidence="10">Highest expression in muscle with lower levels in kidney, placenta, pancreas, brain and heart.</text>
</comment>
<comment type="developmental stage">
    <text evidence="4">At the begin of fourth week of development detected in cytoplasm of somite cells. Between the sixth and eighth week of development detected in cytoplasm of limb bud cells.</text>
</comment>
<comment type="similarity">
    <text evidence="13">Belongs to the HAD-like hydrolase superfamily. EYA family.</text>
</comment>
<comment type="sequence caution" evidence="13">
    <conflict type="erroneous initiation">
        <sequence resource="EMBL-CDS" id="AAH13882"/>
    </conflict>
    <text>Extended N-terminus.</text>
</comment>
<protein>
    <recommendedName>
        <fullName evidence="13">Protein phosphatase EYA2</fullName>
        <ecNumber evidence="5">3.1.3.48</ecNumber>
    </recommendedName>
    <alternativeName>
        <fullName>Eyes absent homolog 2</fullName>
    </alternativeName>
</protein>
<reference key="1">
    <citation type="journal article" date="1997" name="Mamm. Genome">
        <title>Eyes absent: a gene family found in several metazoan phyla.</title>
        <authorList>
            <person name="Duncan M.K."/>
            <person name="Kos L."/>
            <person name="Jenkins N.A."/>
            <person name="Gilbert D.J."/>
            <person name="Copeland N.G."/>
            <person name="Tomarev S.I."/>
        </authorList>
    </citation>
    <scope>NUCLEOTIDE SEQUENCE [MRNA] (ISOFORM 1)</scope>
    <scope>TISSUE SPECIFICITY</scope>
    <source>
        <tissue>Embryonic brain</tissue>
    </source>
</reference>
<reference key="2">
    <citation type="journal article" date="1997" name="Mamm. Genome">
        <authorList>
            <person name="Duncan M.K."/>
            <person name="Kos L."/>
            <person name="Jenkins N.A."/>
            <person name="Gilbert D.J."/>
            <person name="Copeland N.G."/>
            <person name="Tomarev S.I."/>
        </authorList>
    </citation>
    <scope>ERRATUM OF PUBMED:9195991</scope>
</reference>
<reference key="3">
    <citation type="journal article" date="1997" name="Nat. Genet.">
        <title>A human homologue of the Drosophila eyes absent gene underlies branchio-oto-renal (BOR) syndrome and identifies a novel gene family.</title>
        <authorList>
            <person name="Abdelhak S."/>
            <person name="Kalatzis V."/>
            <person name="Heilig R."/>
            <person name="Compain S."/>
            <person name="Samson D."/>
            <person name="Vincent C."/>
            <person name="Weil D."/>
            <person name="Cruaud C."/>
            <person name="Sahly I."/>
            <person name="Leibovici M."/>
            <person name="Bitner-Glindzicz M."/>
            <person name="Francis M."/>
            <person name="Lacombe D."/>
            <person name="Vigneron J."/>
            <person name="Charachon R."/>
            <person name="Boven K."/>
            <person name="Bedbeder P."/>
            <person name="van Regemorter N."/>
            <person name="Weissenbach J."/>
            <person name="Petit C."/>
        </authorList>
    </citation>
    <scope>NUCLEOTIDE SEQUENCE [GENOMIC DNA]</scope>
    <source>
        <tissue>Embryo</tissue>
    </source>
</reference>
<reference key="4">
    <citation type="submission" date="2003-05" db="EMBL/GenBank/DDBJ databases">
        <title>Cloning of human full-length CDSs in BD Creator(TM) system donor vector.</title>
        <authorList>
            <person name="Kalnine N."/>
            <person name="Chen X."/>
            <person name="Rolfs A."/>
            <person name="Halleck A."/>
            <person name="Hines L."/>
            <person name="Eisenstein S."/>
            <person name="Koundinya M."/>
            <person name="Raphael J."/>
            <person name="Moreira D."/>
            <person name="Kelley T."/>
            <person name="LaBaer J."/>
            <person name="Lin Y."/>
            <person name="Phelan M."/>
            <person name="Farmer A."/>
        </authorList>
    </citation>
    <scope>NUCLEOTIDE SEQUENCE [LARGE SCALE MRNA] (ISOFORM 2)</scope>
</reference>
<reference key="5">
    <citation type="journal article" date="2001" name="Nature">
        <title>The DNA sequence and comparative analysis of human chromosome 20.</title>
        <authorList>
            <person name="Deloukas P."/>
            <person name="Matthews L.H."/>
            <person name="Ashurst J.L."/>
            <person name="Burton J."/>
            <person name="Gilbert J.G.R."/>
            <person name="Jones M."/>
            <person name="Stavrides G."/>
            <person name="Almeida J.P."/>
            <person name="Babbage A.K."/>
            <person name="Bagguley C.L."/>
            <person name="Bailey J."/>
            <person name="Barlow K.F."/>
            <person name="Bates K.N."/>
            <person name="Beard L.M."/>
            <person name="Beare D.M."/>
            <person name="Beasley O.P."/>
            <person name="Bird C.P."/>
            <person name="Blakey S.E."/>
            <person name="Bridgeman A.M."/>
            <person name="Brown A.J."/>
            <person name="Buck D."/>
            <person name="Burrill W.D."/>
            <person name="Butler A.P."/>
            <person name="Carder C."/>
            <person name="Carter N.P."/>
            <person name="Chapman J.C."/>
            <person name="Clamp M."/>
            <person name="Clark G."/>
            <person name="Clark L.N."/>
            <person name="Clark S.Y."/>
            <person name="Clee C.M."/>
            <person name="Clegg S."/>
            <person name="Cobley V.E."/>
            <person name="Collier R.E."/>
            <person name="Connor R.E."/>
            <person name="Corby N.R."/>
            <person name="Coulson A."/>
            <person name="Coville G.J."/>
            <person name="Deadman R."/>
            <person name="Dhami P.D."/>
            <person name="Dunn M."/>
            <person name="Ellington A.G."/>
            <person name="Frankland J.A."/>
            <person name="Fraser A."/>
            <person name="French L."/>
            <person name="Garner P."/>
            <person name="Grafham D.V."/>
            <person name="Griffiths C."/>
            <person name="Griffiths M.N.D."/>
            <person name="Gwilliam R."/>
            <person name="Hall R.E."/>
            <person name="Hammond S."/>
            <person name="Harley J.L."/>
            <person name="Heath P.D."/>
            <person name="Ho S."/>
            <person name="Holden J.L."/>
            <person name="Howden P.J."/>
            <person name="Huckle E."/>
            <person name="Hunt A.R."/>
            <person name="Hunt S.E."/>
            <person name="Jekosch K."/>
            <person name="Johnson C.M."/>
            <person name="Johnson D."/>
            <person name="Kay M.P."/>
            <person name="Kimberley A.M."/>
            <person name="King A."/>
            <person name="Knights A."/>
            <person name="Laird G.K."/>
            <person name="Lawlor S."/>
            <person name="Lehvaeslaiho M.H."/>
            <person name="Leversha M.A."/>
            <person name="Lloyd C."/>
            <person name="Lloyd D.M."/>
            <person name="Lovell J.D."/>
            <person name="Marsh V.L."/>
            <person name="Martin S.L."/>
            <person name="McConnachie L.J."/>
            <person name="McLay K."/>
            <person name="McMurray A.A."/>
            <person name="Milne S.A."/>
            <person name="Mistry D."/>
            <person name="Moore M.J.F."/>
            <person name="Mullikin J.C."/>
            <person name="Nickerson T."/>
            <person name="Oliver K."/>
            <person name="Parker A."/>
            <person name="Patel R."/>
            <person name="Pearce T.A.V."/>
            <person name="Peck A.I."/>
            <person name="Phillimore B.J.C.T."/>
            <person name="Prathalingam S.R."/>
            <person name="Plumb R.W."/>
            <person name="Ramsay H."/>
            <person name="Rice C.M."/>
            <person name="Ross M.T."/>
            <person name="Scott C.E."/>
            <person name="Sehra H.K."/>
            <person name="Shownkeen R."/>
            <person name="Sims S."/>
            <person name="Skuce C.D."/>
            <person name="Smith M.L."/>
            <person name="Soderlund C."/>
            <person name="Steward C.A."/>
            <person name="Sulston J.E."/>
            <person name="Swann R.M."/>
            <person name="Sycamore N."/>
            <person name="Taylor R."/>
            <person name="Tee L."/>
            <person name="Thomas D.W."/>
            <person name="Thorpe A."/>
            <person name="Tracey A."/>
            <person name="Tromans A.C."/>
            <person name="Vaudin M."/>
            <person name="Wall M."/>
            <person name="Wallis J.M."/>
            <person name="Whitehead S.L."/>
            <person name="Whittaker P."/>
            <person name="Willey D.L."/>
            <person name="Williams L."/>
            <person name="Williams S.A."/>
            <person name="Wilming L."/>
            <person name="Wray P.W."/>
            <person name="Hubbard T."/>
            <person name="Durbin R.M."/>
            <person name="Bentley D.R."/>
            <person name="Beck S."/>
            <person name="Rogers J."/>
        </authorList>
    </citation>
    <scope>NUCLEOTIDE SEQUENCE [LARGE SCALE GENOMIC DNA]</scope>
</reference>
<reference key="6">
    <citation type="journal article" date="2004" name="Genome Res.">
        <title>The status, quality, and expansion of the NIH full-length cDNA project: the Mammalian Gene Collection (MGC).</title>
        <authorList>
            <consortium name="The MGC Project Team"/>
        </authorList>
    </citation>
    <scope>NUCLEOTIDE SEQUENCE [LARGE SCALE MRNA] (ISOFORMS 2 AND 3)</scope>
    <source>
        <tissue>Lung</tissue>
    </source>
</reference>
<reference key="7">
    <citation type="journal article" date="1997" name="Genome Res.">
        <title>Cloning and characterization of two vertebrate homologs of the Drosophila eyes absent gene.</title>
        <authorList>
            <person name="Zimmerman J.E."/>
            <person name="Bui Q.T."/>
            <person name="Steingrimsson E."/>
            <person name="Nagle D.L."/>
            <person name="Fu W."/>
            <person name="Genin A."/>
            <person name="Spinner N.B."/>
            <person name="Copeland N.G."/>
            <person name="Jenkins N.A."/>
            <person name="Bucan M."/>
            <person name="Bonini N.M."/>
        </authorList>
    </citation>
    <scope>NUCLEOTIDE SEQUENCE [MRNA] OF 295-538</scope>
    <source>
        <tissue>Brain</tissue>
    </source>
</reference>
<reference key="8">
    <citation type="journal article" date="1999" name="Hum. Mol. Genet.">
        <title>EYA4, a novel vertebrate gene related to Drosophila eyes absent.</title>
        <authorList>
            <person name="Borsani G."/>
            <person name="DeGrandi A."/>
            <person name="Ballabio A."/>
            <person name="Bulfone A."/>
            <person name="Bernard L."/>
            <person name="Banfi S."/>
            <person name="Gattuso C."/>
            <person name="Mariani M."/>
            <person name="Dixon M."/>
            <person name="Donnai D."/>
            <person name="Metcalfe K."/>
            <person name="Winter R."/>
            <person name="Robertson M."/>
            <person name="Axton R."/>
            <person name="Brown A."/>
            <person name="van Heyningen V."/>
            <person name="Hanson I."/>
        </authorList>
    </citation>
    <scope>NUCLEOTIDE SEQUENCE [MRNA] OF 378-496</scope>
    <source>
        <tissue>Lens epithelium</tissue>
    </source>
</reference>
<reference key="9">
    <citation type="journal article" date="2000" name="J. Biol. Chem.">
        <title>The alpha subunits of Gz and Gi interact with the eyes absent transcription cofactor Eya2, preventing its interaction with the six class of homeodomain-containing proteins.</title>
        <authorList>
            <person name="Fan X."/>
            <person name="Brass L.F."/>
            <person name="Poncz M."/>
            <person name="Spitz F."/>
            <person name="Maire P."/>
            <person name="Manning D.R."/>
        </authorList>
    </citation>
    <scope>SUBCELLULAR LOCATION</scope>
    <scope>INTERACTION WITH GNAZ AND GNAI2</scope>
</reference>
<reference key="10">
    <citation type="journal article" date="2002" name="J. Muscle Res. Cell Motil.">
        <title>Six and Eya expression during human somitogenesis and MyoD gene family activation.</title>
        <authorList>
            <person name="Fougerousse F."/>
            <person name="Durand M."/>
            <person name="Lopez S."/>
            <person name="Suel L."/>
            <person name="Demignon J."/>
            <person name="Thornton C."/>
            <person name="Ozaki H."/>
            <person name="Kawakami K."/>
            <person name="Barbet P."/>
            <person name="Beckmann J.S."/>
            <person name="Maire P."/>
        </authorList>
    </citation>
    <scope>FUNCTION</scope>
    <scope>SUBCELLULAR LOCATION</scope>
    <scope>DEVELOPMENTAL STAGE</scope>
</reference>
<reference key="11">
    <citation type="journal article" date="2009" name="J. Biol. Chem.">
        <title>Biochemical and functional characterization of six SIX1 Branchio-oto-renal syndrome mutations.</title>
        <authorList>
            <person name="Patrick A.N."/>
            <person name="Schiemann B.J."/>
            <person name="Yang K."/>
            <person name="Zhao R."/>
            <person name="Ford H.L."/>
        </authorList>
    </citation>
    <scope>SUBCELLULAR LOCATION</scope>
    <scope>INTERACTION WITH SIX1</scope>
</reference>
<reference key="12">
    <citation type="journal article" date="2012" name="Oncogene">
        <title>Eya2 is required to mediate the pro-metastatic functions of Six1 via the induction of TGF-beta signaling, epithelial-mesenchymal transition, and cancer stem cell properties.</title>
        <authorList>
            <person name="Farabaugh S.M."/>
            <person name="Micalizzi D.S."/>
            <person name="Jedlicka P."/>
            <person name="Zhao R."/>
            <person name="Ford H.L."/>
        </authorList>
    </citation>
    <scope>FUNCTION</scope>
</reference>
<reference key="13">
    <citation type="journal article" date="2009" name="J. Biol. Chem.">
        <title>Dephosphorylation of the C-terminal tyrosyl residue of the DNA damage-related histone H2A.X is mediated by the protein phosphatase eyes absent.</title>
        <authorList>
            <person name="Krishnan N."/>
            <person name="Jeong D.G."/>
            <person name="Jung S.-K."/>
            <person name="Ryu S.E."/>
            <person name="Xiao A."/>
            <person name="Allis C.D."/>
            <person name="Kim S.J."/>
            <person name="Tonks N.K."/>
        </authorList>
    </citation>
    <scope>X-RAY CRYSTALLOGRAPHY (2.40 ANGSTROMS) OF 268-538 IN COMPLEX WITH MAGNESIUM</scope>
    <scope>FUNCTION</scope>
    <scope>CATALYTIC ACTIVITY</scope>
    <scope>BIOPHYSICOCHEMICAL PROPERTIES</scope>
</reference>
<reference key="14">
    <citation type="journal article" date="2010" name="FASEB J.">
        <title>Crystal structure of ED-Eya2: insight into dual roles as a protein tyrosine phosphatase and a transcription factor.</title>
        <authorList>
            <person name="Jung S.K."/>
            <person name="Jeong D.G."/>
            <person name="Chung S.J."/>
            <person name="Kim J.H."/>
            <person name="Park B.C."/>
            <person name="Tonks N.K."/>
            <person name="Ryu S.E."/>
            <person name="Kim S.J."/>
        </authorList>
    </citation>
    <scope>X-RAY CRYSTALLOGRAPHY (2.5 ANGSTROMS) OF 268-538 IN COMPLEX WITH MAGNESIUM IONS AND TRANSITION STATE ANALOGS</scope>
    <scope>COFACTOR</scope>
    <scope>ACTIVE SITE</scope>
</reference>
<reference key="15">
    <citation type="journal article" date="2013" name="Nat. Struct. Mol. Biol.">
        <title>Structure-function analyses of the human SIX1-EYA2 complex reveal insights into metastasis and BOR syndrome.</title>
        <authorList>
            <person name="Patrick A.N."/>
            <person name="Cabrera J.H."/>
            <person name="Smith A.L."/>
            <person name="Chen X.S."/>
            <person name="Ford H.L."/>
            <person name="Zhao R."/>
        </authorList>
    </citation>
    <scope>X-RAY CRYSTALLOGRAPHY (1.99 ANGSTROMS) OF 253-538 IN COMPLEX WITH SIX1</scope>
    <scope>FUNCTION</scope>
    <scope>SUBUNIT</scope>
    <scope>MUTAGENESIS OF PRO-516 AND ALA-532</scope>
</reference>
<name>EYA2_HUMAN</name>